<reference key="1">
    <citation type="journal article" date="2003" name="Science">
        <title>A genomic view of the human-Bacteroides thetaiotaomicron symbiosis.</title>
        <authorList>
            <person name="Xu J."/>
            <person name="Bjursell M.K."/>
            <person name="Himrod J."/>
            <person name="Deng S."/>
            <person name="Carmichael L.K."/>
            <person name="Chiang H.C."/>
            <person name="Hooper L.V."/>
            <person name="Gordon J.I."/>
        </authorList>
    </citation>
    <scope>NUCLEOTIDE SEQUENCE [LARGE SCALE GENOMIC DNA]</scope>
    <source>
        <strain>ATCC 29148 / DSM 2079 / JCM 5827 / CCUG 10774 / NCTC 10582 / VPI-5482 / E50</strain>
    </source>
</reference>
<comment type="function">
    <text evidence="1">Digests double-stranded RNA. Involved in the processing of primary rRNA transcript to yield the immediate precursors to the large and small rRNAs (23S and 16S). Processes some mRNAs, and tRNAs when they are encoded in the rRNA operon. Processes pre-crRNA and tracrRNA of type II CRISPR loci if present in the organism.</text>
</comment>
<comment type="catalytic activity">
    <reaction evidence="1">
        <text>Endonucleolytic cleavage to 5'-phosphomonoester.</text>
        <dbReference type="EC" id="3.1.26.3"/>
    </reaction>
</comment>
<comment type="cofactor">
    <cofactor evidence="1">
        <name>Mg(2+)</name>
        <dbReference type="ChEBI" id="CHEBI:18420"/>
    </cofactor>
</comment>
<comment type="subunit">
    <text evidence="1">Homodimer.</text>
</comment>
<comment type="subcellular location">
    <subcellularLocation>
        <location evidence="1">Cytoplasm</location>
    </subcellularLocation>
</comment>
<comment type="similarity">
    <text evidence="1">Belongs to the ribonuclease III family.</text>
</comment>
<comment type="sequence caution" evidence="3">
    <conflict type="erroneous initiation">
        <sequence resource="EMBL-CDS" id="AAO78463"/>
    </conflict>
    <text>Extended N-terminus.</text>
</comment>
<gene>
    <name evidence="1" type="primary">rnc</name>
    <name type="ordered locus">BT_3357</name>
</gene>
<keyword id="KW-0963">Cytoplasm</keyword>
<keyword id="KW-0255">Endonuclease</keyword>
<keyword id="KW-0378">Hydrolase</keyword>
<keyword id="KW-0460">Magnesium</keyword>
<keyword id="KW-0479">Metal-binding</keyword>
<keyword id="KW-0507">mRNA processing</keyword>
<keyword id="KW-0540">Nuclease</keyword>
<keyword id="KW-1185">Reference proteome</keyword>
<keyword id="KW-0694">RNA-binding</keyword>
<keyword id="KW-0698">rRNA processing</keyword>
<keyword id="KW-0699">rRNA-binding</keyword>
<keyword id="KW-0819">tRNA processing</keyword>
<name>RNC_BACTN</name>
<dbReference type="EC" id="3.1.26.3" evidence="1"/>
<dbReference type="EMBL" id="AE015928">
    <property type="protein sequence ID" value="AAO78463.1"/>
    <property type="status" value="ALT_INIT"/>
    <property type="molecule type" value="Genomic_DNA"/>
</dbReference>
<dbReference type="RefSeq" id="NP_812269.1">
    <property type="nucleotide sequence ID" value="NC_004663.1"/>
</dbReference>
<dbReference type="RefSeq" id="WP_011108787.1">
    <property type="nucleotide sequence ID" value="NC_004663.1"/>
</dbReference>
<dbReference type="SMR" id="Q8A2E8"/>
<dbReference type="FunCoup" id="Q8A2E8">
    <property type="interactions" value="441"/>
</dbReference>
<dbReference type="STRING" id="226186.BT_3357"/>
<dbReference type="PaxDb" id="226186-BT_3357"/>
<dbReference type="EnsemblBacteria" id="AAO78463">
    <property type="protein sequence ID" value="AAO78463"/>
    <property type="gene ID" value="BT_3357"/>
</dbReference>
<dbReference type="GeneID" id="60924536"/>
<dbReference type="KEGG" id="bth:BT_3357"/>
<dbReference type="PATRIC" id="fig|226186.12.peg.3425"/>
<dbReference type="eggNOG" id="COG0571">
    <property type="taxonomic scope" value="Bacteria"/>
</dbReference>
<dbReference type="HOGENOM" id="CLU_000907_1_0_10"/>
<dbReference type="InParanoid" id="Q8A2E8"/>
<dbReference type="OrthoDB" id="9805026at2"/>
<dbReference type="Proteomes" id="UP000001414">
    <property type="component" value="Chromosome"/>
</dbReference>
<dbReference type="GO" id="GO:0005829">
    <property type="term" value="C:cytosol"/>
    <property type="evidence" value="ECO:0000318"/>
    <property type="project" value="GO_Central"/>
</dbReference>
<dbReference type="GO" id="GO:0003725">
    <property type="term" value="F:double-stranded RNA binding"/>
    <property type="evidence" value="ECO:0000318"/>
    <property type="project" value="GO_Central"/>
</dbReference>
<dbReference type="GO" id="GO:0046872">
    <property type="term" value="F:metal ion binding"/>
    <property type="evidence" value="ECO:0007669"/>
    <property type="project" value="UniProtKB-KW"/>
</dbReference>
<dbReference type="GO" id="GO:0004525">
    <property type="term" value="F:ribonuclease III activity"/>
    <property type="evidence" value="ECO:0000318"/>
    <property type="project" value="GO_Central"/>
</dbReference>
<dbReference type="GO" id="GO:0019843">
    <property type="term" value="F:rRNA binding"/>
    <property type="evidence" value="ECO:0007669"/>
    <property type="project" value="UniProtKB-KW"/>
</dbReference>
<dbReference type="GO" id="GO:0006397">
    <property type="term" value="P:mRNA processing"/>
    <property type="evidence" value="ECO:0007669"/>
    <property type="project" value="UniProtKB-UniRule"/>
</dbReference>
<dbReference type="GO" id="GO:0010468">
    <property type="term" value="P:regulation of gene expression"/>
    <property type="evidence" value="ECO:0000318"/>
    <property type="project" value="GO_Central"/>
</dbReference>
<dbReference type="GO" id="GO:0006396">
    <property type="term" value="P:RNA processing"/>
    <property type="evidence" value="ECO:0000318"/>
    <property type="project" value="GO_Central"/>
</dbReference>
<dbReference type="GO" id="GO:0006364">
    <property type="term" value="P:rRNA processing"/>
    <property type="evidence" value="ECO:0007669"/>
    <property type="project" value="UniProtKB-UniRule"/>
</dbReference>
<dbReference type="GO" id="GO:0008033">
    <property type="term" value="P:tRNA processing"/>
    <property type="evidence" value="ECO:0007669"/>
    <property type="project" value="UniProtKB-KW"/>
</dbReference>
<dbReference type="CDD" id="cd10845">
    <property type="entry name" value="DSRM_RNAse_III_family"/>
    <property type="match status" value="1"/>
</dbReference>
<dbReference type="CDD" id="cd00593">
    <property type="entry name" value="RIBOc"/>
    <property type="match status" value="1"/>
</dbReference>
<dbReference type="FunFam" id="1.10.1520.10:FF:000012">
    <property type="entry name" value="Ribonuclease 3"/>
    <property type="match status" value="1"/>
</dbReference>
<dbReference type="FunFam" id="3.30.160.20:FF:000081">
    <property type="entry name" value="Ribonuclease 3"/>
    <property type="match status" value="1"/>
</dbReference>
<dbReference type="Gene3D" id="3.30.160.20">
    <property type="match status" value="1"/>
</dbReference>
<dbReference type="Gene3D" id="1.10.1520.10">
    <property type="entry name" value="Ribonuclease III domain"/>
    <property type="match status" value="1"/>
</dbReference>
<dbReference type="HAMAP" id="MF_00104">
    <property type="entry name" value="RNase_III"/>
    <property type="match status" value="1"/>
</dbReference>
<dbReference type="InterPro" id="IPR014720">
    <property type="entry name" value="dsRBD_dom"/>
</dbReference>
<dbReference type="InterPro" id="IPR011907">
    <property type="entry name" value="RNase_III"/>
</dbReference>
<dbReference type="InterPro" id="IPR000999">
    <property type="entry name" value="RNase_III_dom"/>
</dbReference>
<dbReference type="InterPro" id="IPR036389">
    <property type="entry name" value="RNase_III_sf"/>
</dbReference>
<dbReference type="NCBIfam" id="TIGR02191">
    <property type="entry name" value="RNaseIII"/>
    <property type="match status" value="1"/>
</dbReference>
<dbReference type="PANTHER" id="PTHR11207:SF0">
    <property type="entry name" value="RIBONUCLEASE 3"/>
    <property type="match status" value="1"/>
</dbReference>
<dbReference type="PANTHER" id="PTHR11207">
    <property type="entry name" value="RIBONUCLEASE III"/>
    <property type="match status" value="1"/>
</dbReference>
<dbReference type="Pfam" id="PF00035">
    <property type="entry name" value="dsrm"/>
    <property type="match status" value="1"/>
</dbReference>
<dbReference type="Pfam" id="PF14622">
    <property type="entry name" value="Ribonucleas_3_3"/>
    <property type="match status" value="1"/>
</dbReference>
<dbReference type="SMART" id="SM00358">
    <property type="entry name" value="DSRM"/>
    <property type="match status" value="1"/>
</dbReference>
<dbReference type="SMART" id="SM00535">
    <property type="entry name" value="RIBOc"/>
    <property type="match status" value="1"/>
</dbReference>
<dbReference type="SUPFAM" id="SSF54768">
    <property type="entry name" value="dsRNA-binding domain-like"/>
    <property type="match status" value="1"/>
</dbReference>
<dbReference type="SUPFAM" id="SSF69065">
    <property type="entry name" value="RNase III domain-like"/>
    <property type="match status" value="1"/>
</dbReference>
<dbReference type="PROSITE" id="PS50137">
    <property type="entry name" value="DS_RBD"/>
    <property type="match status" value="1"/>
</dbReference>
<dbReference type="PROSITE" id="PS00517">
    <property type="entry name" value="RNASE_3_1"/>
    <property type="match status" value="1"/>
</dbReference>
<dbReference type="PROSITE" id="PS50142">
    <property type="entry name" value="RNASE_3_2"/>
    <property type="match status" value="1"/>
</dbReference>
<evidence type="ECO:0000255" key="1">
    <source>
        <dbReference type="HAMAP-Rule" id="MF_00104"/>
    </source>
</evidence>
<evidence type="ECO:0000256" key="2">
    <source>
        <dbReference type="SAM" id="MobiDB-lite"/>
    </source>
</evidence>
<evidence type="ECO:0000305" key="3"/>
<proteinExistence type="inferred from homology"/>
<protein>
    <recommendedName>
        <fullName evidence="1">Ribonuclease 3</fullName>
        <ecNumber evidence="1">3.1.26.3</ecNumber>
    </recommendedName>
    <alternativeName>
        <fullName evidence="1">Ribonuclease III</fullName>
        <shortName evidence="1">RNase III</shortName>
    </alternativeName>
</protein>
<feature type="chain" id="PRO_0000228498" description="Ribonuclease 3">
    <location>
        <begin position="1"/>
        <end position="311"/>
    </location>
</feature>
<feature type="domain" description="RNase III" evidence="1">
    <location>
        <begin position="20"/>
        <end position="145"/>
    </location>
</feature>
<feature type="domain" description="DRBM" evidence="1">
    <location>
        <begin position="173"/>
        <end position="242"/>
    </location>
</feature>
<feature type="region of interest" description="Disordered" evidence="2">
    <location>
        <begin position="250"/>
        <end position="311"/>
    </location>
</feature>
<feature type="compositionally biased region" description="Acidic residues" evidence="2">
    <location>
        <begin position="262"/>
        <end position="288"/>
    </location>
</feature>
<feature type="active site" evidence="1">
    <location>
        <position position="66"/>
    </location>
</feature>
<feature type="active site" evidence="1">
    <location>
        <position position="134"/>
    </location>
</feature>
<feature type="binding site" evidence="1">
    <location>
        <position position="62"/>
    </location>
    <ligand>
        <name>Mg(2+)</name>
        <dbReference type="ChEBI" id="CHEBI:18420"/>
    </ligand>
</feature>
<feature type="binding site" evidence="1">
    <location>
        <position position="131"/>
    </location>
    <ligand>
        <name>Mg(2+)</name>
        <dbReference type="ChEBI" id="CHEBI:18420"/>
    </ligand>
</feature>
<feature type="binding site" evidence="1">
    <location>
        <position position="134"/>
    </location>
    <ligand>
        <name>Mg(2+)</name>
        <dbReference type="ChEBI" id="CHEBI:18420"/>
    </ligand>
</feature>
<accession>Q8A2E8</accession>
<organism>
    <name type="scientific">Bacteroides thetaiotaomicron (strain ATCC 29148 / DSM 2079 / JCM 5827 / CCUG 10774 / NCTC 10582 / VPI-5482 / E50)</name>
    <dbReference type="NCBI Taxonomy" id="226186"/>
    <lineage>
        <taxon>Bacteria</taxon>
        <taxon>Pseudomonadati</taxon>
        <taxon>Bacteroidota</taxon>
        <taxon>Bacteroidia</taxon>
        <taxon>Bacteroidales</taxon>
        <taxon>Bacteroidaceae</taxon>
        <taxon>Bacteroides</taxon>
    </lineage>
</organism>
<sequence>MLRNQIDKIRLLFRKDRESYLCFYRILGFYPHNIQIYEQALLHKSSAVRSEKGRPLNNERLEFLGDAILDAIVGDIVYKRFEGKREGFLTNTRSKIVQRETLNKLAVEIGLDKLIKYSTRSSSHNSYMYGNAFEAFIGAIYLDQGYERCKQFMEQRIINRYIDLDKISRKEVNFKSKLIEWSQKNKMEVSFELIEQFLDHDSNPVFQTEVRIEGLPAGTGTGYSKKESQQNAAQMAIKKVKDQTFMDTVNEAKSQHSKPSEVETESVEPELTESETMEPDTLETEAPEAETTADKVETTVNEVEATETEKE</sequence>